<reference key="1">
    <citation type="submission" date="2006-03" db="EMBL/GenBank/DDBJ databases">
        <title>DNA sequences of macaque genes expressed in brain or testis and its evolutionary implications.</title>
        <authorList>
            <consortium name="International consortium for macaque cDNA sequencing and analysis"/>
        </authorList>
    </citation>
    <scope>NUCLEOTIDE SEQUENCE [LARGE SCALE MRNA]</scope>
    <source>
        <tissue>Occipital cortex</tissue>
    </source>
</reference>
<organism>
    <name type="scientific">Macaca fascicularis</name>
    <name type="common">Crab-eating macaque</name>
    <name type="synonym">Cynomolgus monkey</name>
    <dbReference type="NCBI Taxonomy" id="9541"/>
    <lineage>
        <taxon>Eukaryota</taxon>
        <taxon>Metazoa</taxon>
        <taxon>Chordata</taxon>
        <taxon>Craniata</taxon>
        <taxon>Vertebrata</taxon>
        <taxon>Euteleostomi</taxon>
        <taxon>Mammalia</taxon>
        <taxon>Eutheria</taxon>
        <taxon>Euarchontoglires</taxon>
        <taxon>Primates</taxon>
        <taxon>Haplorrhini</taxon>
        <taxon>Catarrhini</taxon>
        <taxon>Cercopithecidae</taxon>
        <taxon>Cercopithecinae</taxon>
        <taxon>Macaca</taxon>
    </lineage>
</organism>
<name>SNX2_MACFA</name>
<keyword id="KW-0007">Acetylation</keyword>
<keyword id="KW-0966">Cell projection</keyword>
<keyword id="KW-0967">Endosome</keyword>
<keyword id="KW-0446">Lipid-binding</keyword>
<keyword id="KW-0472">Membrane</keyword>
<keyword id="KW-0597">Phosphoprotein</keyword>
<keyword id="KW-0653">Protein transport</keyword>
<keyword id="KW-1185">Reference proteome</keyword>
<keyword id="KW-0813">Transport</keyword>
<sequence length="523" mass="58901">MAAEREPPPLGDGKPTDFEDLEDGEDLFTSTVSTLESSPSSPEPASLPAEDISANSNGPKPTEVGLDDDREDLFAEATEEVSLDSPEREPILSSEPSPAVTPVTPTTLIAPRIESKSMSAPVIFDRSREEIEEEANGDIFDIEIGVSDPEKVGDGMNAYMAYRVTTKTSLSMFSKSEFSVKRRFSDFLGLHSKLASKYLHVGYIVPPAPEKSIVGMTKVKVGKEDSSSTEFVEKRRAALERYLQRTVKHPTLLQDPDLRQFLESSELPRAVNTQALSGAGILRMVNKAADAVNKMTIKMNESDAWFEEKQQQFENLDQQLRKLHASVEALVCHRKELSANTAAFAKSAAMLGNSEDHTALSRALSQLAEVEEKIDQLHQEQAFADFYMFSELLSDYIRLIAAVKGVFDHRMKCWQKWEDAQITLLKKREAEAKMMVANKPDKIQQAKNEIREEIEEWEAKVQQGERDFEQISKTIRKEVGRFEKERVKDFKTVIIKYLESLVQTQQQLIKYWEAFLPEAKAIA</sequence>
<gene>
    <name type="primary">SNX2</name>
    <name type="ORF">QorA-14039</name>
</gene>
<accession>P0C220</accession>
<feature type="chain" id="PRO_0000236194" description="Sorting nexin-2">
    <location>
        <begin position="1"/>
        <end position="523"/>
    </location>
</feature>
<feature type="domain" description="PX" evidence="5">
    <location>
        <begin position="140"/>
        <end position="269"/>
    </location>
</feature>
<feature type="domain" description="BAR" evidence="2">
    <location>
        <begin position="299"/>
        <end position="523"/>
    </location>
</feature>
<feature type="region of interest" description="Disordered" evidence="6">
    <location>
        <begin position="1"/>
        <end position="104"/>
    </location>
</feature>
<feature type="region of interest" description="Interaction with RhoG" evidence="1">
    <location>
        <begin position="260"/>
        <end position="523"/>
    </location>
</feature>
<feature type="region of interest" description="Membrane-binding amphipathic helix" evidence="1">
    <location>
        <begin position="278"/>
        <end position="295"/>
    </location>
</feature>
<feature type="compositionally biased region" description="Low complexity" evidence="6">
    <location>
        <begin position="27"/>
        <end position="50"/>
    </location>
</feature>
<feature type="compositionally biased region" description="Low complexity" evidence="6">
    <location>
        <begin position="93"/>
        <end position="104"/>
    </location>
</feature>
<feature type="binding site" evidence="3">
    <location>
        <position position="183"/>
    </location>
    <ligand>
        <name>a 1,2-diacyl-sn-glycero-3-phospho-(1D-myo-inositol-3-phosphate)</name>
        <dbReference type="ChEBI" id="CHEBI:58088"/>
    </ligand>
</feature>
<feature type="binding site" evidence="3">
    <location>
        <position position="185"/>
    </location>
    <ligand>
        <name>a 1,2-diacyl-sn-glycero-3-phospho-(1D-myo-inositol-3-phosphate)</name>
        <dbReference type="ChEBI" id="CHEBI:58088"/>
    </ligand>
</feature>
<feature type="binding site" evidence="3">
    <location>
        <position position="211"/>
    </location>
    <ligand>
        <name>a 1,2-diacyl-sn-glycero-3-phospho-(1D-myo-inositol-3-phosphate)</name>
        <dbReference type="ChEBI" id="CHEBI:58088"/>
    </ligand>
</feature>
<feature type="binding site" evidence="3">
    <location>
        <position position="235"/>
    </location>
    <ligand>
        <name>a 1,2-diacyl-sn-glycero-3-phospho-(1D-myo-inositol-3-phosphate)</name>
        <dbReference type="ChEBI" id="CHEBI:58088"/>
    </ligand>
</feature>
<feature type="modified residue" description="Phosphoserine" evidence="4">
    <location>
        <position position="97"/>
    </location>
</feature>
<feature type="modified residue" description="Phosphothreonine" evidence="1">
    <location>
        <position position="101"/>
    </location>
</feature>
<feature type="modified residue" description="Phosphothreonine" evidence="1">
    <location>
        <position position="104"/>
    </location>
</feature>
<feature type="modified residue" description="Phosphoserine" evidence="1">
    <location>
        <position position="117"/>
    </location>
</feature>
<feature type="modified residue" description="Phosphoserine" evidence="1">
    <location>
        <position position="119"/>
    </location>
</feature>
<feature type="modified residue" description="Phosphoserine" evidence="1">
    <location>
        <position position="185"/>
    </location>
</feature>
<feature type="modified residue" description="Phosphoserine" evidence="1">
    <location>
        <position position="277"/>
    </location>
</feature>
<feature type="modified residue" description="N6-acetyllysine" evidence="1">
    <location>
        <position position="473"/>
    </location>
</feature>
<evidence type="ECO:0000250" key="1">
    <source>
        <dbReference type="UniProtKB" id="O60749"/>
    </source>
</evidence>
<evidence type="ECO:0000250" key="2">
    <source>
        <dbReference type="UniProtKB" id="Q13596"/>
    </source>
</evidence>
<evidence type="ECO:0000250" key="3">
    <source>
        <dbReference type="UniProtKB" id="Q96L94"/>
    </source>
</evidence>
<evidence type="ECO:0000250" key="4">
    <source>
        <dbReference type="UniProtKB" id="Q9CWK8"/>
    </source>
</evidence>
<evidence type="ECO:0000255" key="5">
    <source>
        <dbReference type="PROSITE-ProRule" id="PRU00147"/>
    </source>
</evidence>
<evidence type="ECO:0000256" key="6">
    <source>
        <dbReference type="SAM" id="MobiDB-lite"/>
    </source>
</evidence>
<evidence type="ECO:0000305" key="7"/>
<proteinExistence type="evidence at transcript level"/>
<dbReference type="EMBL" id="AB171301">
    <property type="protein sequence ID" value="BAE88364.1"/>
    <property type="molecule type" value="mRNA"/>
</dbReference>
<dbReference type="RefSeq" id="NP_001271755.1">
    <property type="nucleotide sequence ID" value="NM_001284826.1"/>
</dbReference>
<dbReference type="SMR" id="P0C220"/>
<dbReference type="STRING" id="9541.ENSMFAP00000013948"/>
<dbReference type="Ensembl" id="ENSMFAT00000064410.2">
    <property type="protein sequence ID" value="ENSMFAP00000013948.2"/>
    <property type="gene ID" value="ENSMFAG00000029999.2"/>
</dbReference>
<dbReference type="eggNOG" id="KOG2273">
    <property type="taxonomic scope" value="Eukaryota"/>
</dbReference>
<dbReference type="GeneTree" id="ENSGT00940000155798"/>
<dbReference type="Proteomes" id="UP000233100">
    <property type="component" value="Chromosome 6"/>
</dbReference>
<dbReference type="Bgee" id="ENSMFAG00000029999">
    <property type="expression patterns" value="Expressed in spleen and 13 other cell types or tissues"/>
</dbReference>
<dbReference type="GO" id="GO:0005829">
    <property type="term" value="C:cytosol"/>
    <property type="evidence" value="ECO:0007669"/>
    <property type="project" value="GOC"/>
</dbReference>
<dbReference type="GO" id="GO:0031901">
    <property type="term" value="C:early endosome membrane"/>
    <property type="evidence" value="ECO:0007669"/>
    <property type="project" value="UniProtKB-SubCell"/>
</dbReference>
<dbReference type="GO" id="GO:0010008">
    <property type="term" value="C:endosome membrane"/>
    <property type="evidence" value="ECO:0000250"/>
    <property type="project" value="UniProtKB"/>
</dbReference>
<dbReference type="GO" id="GO:0030027">
    <property type="term" value="C:lamellipodium"/>
    <property type="evidence" value="ECO:0007669"/>
    <property type="project" value="UniProtKB-SubCell"/>
</dbReference>
<dbReference type="GO" id="GO:0030904">
    <property type="term" value="C:retromer complex"/>
    <property type="evidence" value="ECO:0007669"/>
    <property type="project" value="InterPro"/>
</dbReference>
<dbReference type="GO" id="GO:0035091">
    <property type="term" value="F:phosphatidylinositol binding"/>
    <property type="evidence" value="ECO:0007669"/>
    <property type="project" value="InterPro"/>
</dbReference>
<dbReference type="GO" id="GO:0034498">
    <property type="term" value="P:early endosome to Golgi transport"/>
    <property type="evidence" value="ECO:0007669"/>
    <property type="project" value="TreeGrafter"/>
</dbReference>
<dbReference type="GO" id="GO:0006886">
    <property type="term" value="P:intracellular protein transport"/>
    <property type="evidence" value="ECO:0007669"/>
    <property type="project" value="InterPro"/>
</dbReference>
<dbReference type="GO" id="GO:0072673">
    <property type="term" value="P:lamellipodium morphogenesis"/>
    <property type="evidence" value="ECO:0000250"/>
    <property type="project" value="UniProtKB"/>
</dbReference>
<dbReference type="GO" id="GO:0042147">
    <property type="term" value="P:retrograde transport, endosome to Golgi"/>
    <property type="evidence" value="ECO:0000250"/>
    <property type="project" value="UniProtKB"/>
</dbReference>
<dbReference type="CDD" id="cd07282">
    <property type="entry name" value="PX_SNX2"/>
    <property type="match status" value="1"/>
</dbReference>
<dbReference type="FunFam" id="1.20.1270.60:FF:000012">
    <property type="entry name" value="Sorting nexin 2"/>
    <property type="match status" value="1"/>
</dbReference>
<dbReference type="FunFam" id="3.30.1520.10:FF:000016">
    <property type="entry name" value="Sorting nexin 2"/>
    <property type="match status" value="1"/>
</dbReference>
<dbReference type="Gene3D" id="1.20.1270.60">
    <property type="entry name" value="Arfaptin homology (AH) domain/BAR domain"/>
    <property type="match status" value="1"/>
</dbReference>
<dbReference type="Gene3D" id="3.30.1520.10">
    <property type="entry name" value="Phox-like domain"/>
    <property type="match status" value="1"/>
</dbReference>
<dbReference type="InterPro" id="IPR027267">
    <property type="entry name" value="AH/BAR_dom_sf"/>
</dbReference>
<dbReference type="InterPro" id="IPR001683">
    <property type="entry name" value="PX_dom"/>
</dbReference>
<dbReference type="InterPro" id="IPR036871">
    <property type="entry name" value="PX_dom_sf"/>
</dbReference>
<dbReference type="InterPro" id="IPR037918">
    <property type="entry name" value="SNX2_PX"/>
</dbReference>
<dbReference type="InterPro" id="IPR005329">
    <property type="entry name" value="Sorting_nexin_N"/>
</dbReference>
<dbReference type="InterPro" id="IPR015404">
    <property type="entry name" value="Vps5_C"/>
</dbReference>
<dbReference type="PANTHER" id="PTHR10555">
    <property type="entry name" value="SORTING NEXIN"/>
    <property type="match status" value="1"/>
</dbReference>
<dbReference type="PANTHER" id="PTHR10555:SF31">
    <property type="entry name" value="SORTING NEXIN-2"/>
    <property type="match status" value="1"/>
</dbReference>
<dbReference type="Pfam" id="PF00787">
    <property type="entry name" value="PX"/>
    <property type="match status" value="1"/>
</dbReference>
<dbReference type="Pfam" id="PF03700">
    <property type="entry name" value="Sorting_nexin"/>
    <property type="match status" value="1"/>
</dbReference>
<dbReference type="Pfam" id="PF09325">
    <property type="entry name" value="Vps5"/>
    <property type="match status" value="1"/>
</dbReference>
<dbReference type="SMART" id="SM00312">
    <property type="entry name" value="PX"/>
    <property type="match status" value="1"/>
</dbReference>
<dbReference type="SUPFAM" id="SSF103657">
    <property type="entry name" value="BAR/IMD domain-like"/>
    <property type="match status" value="1"/>
</dbReference>
<dbReference type="SUPFAM" id="SSF64268">
    <property type="entry name" value="PX domain"/>
    <property type="match status" value="1"/>
</dbReference>
<dbReference type="PROSITE" id="PS50195">
    <property type="entry name" value="PX"/>
    <property type="match status" value="1"/>
</dbReference>
<protein>
    <recommendedName>
        <fullName>Sorting nexin-2</fullName>
    </recommendedName>
</protein>
<comment type="function">
    <text evidence="1">Involved in several stages of intracellular trafficking. Interacts with membranes containing phosphatidylinositol 3-phosphate (PtdIns(3P)) or phosphatidylinositol 3,5-bisphosphate (PtdIns(3,5)P2). Acts in part as component of the retromer membrane-deforming SNX-BAR subcomplex. The SNX-BAR retromer mediates retrograde transport of cargo proteins from endosomes to the trans-Golgi network (TGN) and is involved in endosome-to-plasma membrane transport for cargo protein recycling. The SNX-BAR subcomplex functions to deform the donor membrane into a tubular profile called endosome-to-TGN transport carrier (ETC). Can sense membrane curvature and has in vitro vesicle-to-membrane remodeling activity. Required for retrograde endosome-to-TGN transport of TGN38. Promotes KALRN- and RHOG-dependent but retromer-independent membrane remodeling such as lamellipodium formation; the function is dependent on GEF activity of KALRN (By similarity).</text>
</comment>
<comment type="subunit">
    <text evidence="1">Predominantly forms heterodimers with BAR domain-containing sorting nexins SNX5, SNX6 and SNX32; can self-associate to form homodimers. The heterodimers are proposed to self-assemble into helical arrays on the membrane to stabilize and expand local membrane curvature underlying endosomal tubule formation. Thought to be a component of the originally described retromer complex (also called SNX-BAR retromer) which is a pentamer containing the heterotrimeric retromer cargo-selective complex (CSC), also described as vacuolar protein sorting subcomplex (VPS), and a heterodimeric membrane-deforming subcomplex formed between SNX1 or SNX2 and SNX5 or SNX6 (also called SNX-BAR subcomplex); the respective CSC and SNX-BAR subcomplexes associate with low affinity. Interacts with SNX5, SNX6, SNX32, VPS26A, VPS29, VPS35, FNBP1, KALRN, RHOG (GDP-bound form) (By similarity).</text>
</comment>
<comment type="subcellular location">
    <subcellularLocation>
        <location>Early endosome membrane</location>
        <topology>Peripheral membrane protein</topology>
        <orientation evidence="1">Cytoplasmic side</orientation>
    </subcellularLocation>
    <subcellularLocation>
        <location>Cell projection</location>
        <location>Lamellipodium</location>
    </subcellularLocation>
    <text evidence="1">Colocalized with SORT1 to tubular endosomal membrane structures called endosome-to-TGN transport carriers (ETCs) which are budding from early endosome vacuoles just before maturing into late endosome vacuoles. Colocalized with F-actin at the leading edge of lamellipodia in cells in a KALRN-dependent manner (By similarity).</text>
</comment>
<comment type="domain">
    <text evidence="1">The BAR domain is able to sense membrane curvature upon dimerization. Membrane remodeling seems to implicate insertion of a N-terminal amphipathic helix (AH) in the membrane (By similarity).</text>
</comment>
<comment type="similarity">
    <text evidence="7">Belongs to the sorting nexin family.</text>
</comment>